<dbReference type="EC" id="3.4.21.42" evidence="1"/>
<dbReference type="EMBL" id="AF459020">
    <property type="protein sequence ID" value="AAO15559.1"/>
    <property type="molecule type" value="mRNA"/>
</dbReference>
<dbReference type="RefSeq" id="NP_776289.2">
    <property type="nucleotide sequence ID" value="NM_173864.2"/>
</dbReference>
<dbReference type="SMR" id="Q8CFG8"/>
<dbReference type="ComplexPortal" id="CPX-4985">
    <property type="entry name" value="Complement C1 complex, C1rb-C1sb variant"/>
</dbReference>
<dbReference type="FunCoup" id="Q8CFG8">
    <property type="interactions" value="182"/>
</dbReference>
<dbReference type="STRING" id="10090.ENSMUSP00000151642"/>
<dbReference type="MEROPS" id="S01.210"/>
<dbReference type="GlyCosmos" id="Q8CFG8">
    <property type="glycosylation" value="1 site, No reported glycans"/>
</dbReference>
<dbReference type="GlyGen" id="Q8CFG8">
    <property type="glycosylation" value="1 site"/>
</dbReference>
<dbReference type="iPTMnet" id="Q8CFG8"/>
<dbReference type="PhosphoSitePlus" id="Q8CFG8"/>
<dbReference type="CPTAC" id="non-CPTAC-3971"/>
<dbReference type="PaxDb" id="10090-ENSMUSP00000066999"/>
<dbReference type="PeptideAtlas" id="Q8CFG8"/>
<dbReference type="DNASU" id="317677"/>
<dbReference type="Ensembl" id="ENSMUST00000068797.3">
    <property type="protein sequence ID" value="ENSMUSP00000066999.4"/>
    <property type="gene ID" value="ENSMUSG00000079343.5"/>
</dbReference>
<dbReference type="GeneID" id="317677"/>
<dbReference type="KEGG" id="mmu:317677"/>
<dbReference type="AGR" id="MGI:3644269"/>
<dbReference type="CTD" id="317677"/>
<dbReference type="MGI" id="MGI:3644269">
    <property type="gene designation" value="C1s2"/>
</dbReference>
<dbReference type="VEuPathDB" id="HostDB:ENSMUSG00000079343"/>
<dbReference type="eggNOG" id="KOG3627">
    <property type="taxonomic scope" value="Eukaryota"/>
</dbReference>
<dbReference type="GeneTree" id="ENSGT00940000157473"/>
<dbReference type="InParanoid" id="Q8CFG8"/>
<dbReference type="OMA" id="RICGVNC"/>
<dbReference type="OrthoDB" id="9985152at2759"/>
<dbReference type="PhylomeDB" id="Q8CFG8"/>
<dbReference type="Reactome" id="R-MMU-166663">
    <property type="pathway name" value="Initial triggering of complement"/>
</dbReference>
<dbReference type="Reactome" id="R-MMU-173623">
    <property type="pathway name" value="Classical antibody-mediated complement activation"/>
</dbReference>
<dbReference type="Reactome" id="R-MMU-977606">
    <property type="pathway name" value="Regulation of Complement cascade"/>
</dbReference>
<dbReference type="BioGRID-ORCS" id="317677">
    <property type="hits" value="0 hits in 70 CRISPR screens"/>
</dbReference>
<dbReference type="ChiTaRS" id="C1s2">
    <property type="organism name" value="mouse"/>
</dbReference>
<dbReference type="PRO" id="PR:Q8CFG8"/>
<dbReference type="Proteomes" id="UP000000589">
    <property type="component" value="Chromosome 6"/>
</dbReference>
<dbReference type="RNAct" id="Q8CFG8">
    <property type="molecule type" value="protein"/>
</dbReference>
<dbReference type="Bgee" id="ENSMUSG00000079343">
    <property type="expression patterns" value="Expressed in hindlimb stylopod muscle and 28 other cell types or tissues"/>
</dbReference>
<dbReference type="ExpressionAtlas" id="Q8CFG8">
    <property type="expression patterns" value="baseline and differential"/>
</dbReference>
<dbReference type="GO" id="GO:0005576">
    <property type="term" value="C:extracellular region"/>
    <property type="evidence" value="ECO:0007669"/>
    <property type="project" value="InterPro"/>
</dbReference>
<dbReference type="GO" id="GO:0005509">
    <property type="term" value="F:calcium ion binding"/>
    <property type="evidence" value="ECO:0007669"/>
    <property type="project" value="InterPro"/>
</dbReference>
<dbReference type="GO" id="GO:0004252">
    <property type="term" value="F:serine-type endopeptidase activity"/>
    <property type="evidence" value="ECO:0007669"/>
    <property type="project" value="UniProtKB-EC"/>
</dbReference>
<dbReference type="GO" id="GO:0006958">
    <property type="term" value="P:complement activation, classical pathway"/>
    <property type="evidence" value="ECO:0007669"/>
    <property type="project" value="UniProtKB-KW"/>
</dbReference>
<dbReference type="GO" id="GO:0045087">
    <property type="term" value="P:innate immune response"/>
    <property type="evidence" value="ECO:0007669"/>
    <property type="project" value="UniProtKB-KW"/>
</dbReference>
<dbReference type="GO" id="GO:0006508">
    <property type="term" value="P:proteolysis"/>
    <property type="evidence" value="ECO:0007669"/>
    <property type="project" value="UniProtKB-KW"/>
</dbReference>
<dbReference type="CDD" id="cd00033">
    <property type="entry name" value="CCP"/>
    <property type="match status" value="2"/>
</dbReference>
<dbReference type="CDD" id="cd00041">
    <property type="entry name" value="CUB"/>
    <property type="match status" value="2"/>
</dbReference>
<dbReference type="CDD" id="cd00054">
    <property type="entry name" value="EGF_CA"/>
    <property type="match status" value="1"/>
</dbReference>
<dbReference type="CDD" id="cd00190">
    <property type="entry name" value="Tryp_SPc"/>
    <property type="match status" value="1"/>
</dbReference>
<dbReference type="FunFam" id="2.10.70.10:FF:000049">
    <property type="entry name" value="Complement C1s subcomponent"/>
    <property type="match status" value="1"/>
</dbReference>
<dbReference type="FunFam" id="2.40.10.10:FF:000067">
    <property type="entry name" value="Complement C1s subcomponent"/>
    <property type="match status" value="1"/>
</dbReference>
<dbReference type="FunFam" id="2.60.120.290:FF:000034">
    <property type="entry name" value="complement C1s subcomponent"/>
    <property type="match status" value="1"/>
</dbReference>
<dbReference type="FunFam" id="2.10.25.10:FF:000059">
    <property type="entry name" value="Mannan-binding lectin serine protease 1"/>
    <property type="match status" value="1"/>
</dbReference>
<dbReference type="FunFam" id="2.10.70.10:FF:000016">
    <property type="entry name" value="Mannan-binding lectin serine protease 1"/>
    <property type="match status" value="1"/>
</dbReference>
<dbReference type="FunFam" id="2.60.120.290:FF:000006">
    <property type="entry name" value="Mannan-binding lectin serine protease 1"/>
    <property type="match status" value="1"/>
</dbReference>
<dbReference type="Gene3D" id="2.10.70.10">
    <property type="entry name" value="Complement Module, domain 1"/>
    <property type="match status" value="2"/>
</dbReference>
<dbReference type="Gene3D" id="2.10.25.10">
    <property type="entry name" value="Laminin"/>
    <property type="match status" value="1"/>
</dbReference>
<dbReference type="Gene3D" id="2.60.120.290">
    <property type="entry name" value="Spermadhesin, CUB domain"/>
    <property type="match status" value="2"/>
</dbReference>
<dbReference type="Gene3D" id="2.40.10.10">
    <property type="entry name" value="Trypsin-like serine proteases"/>
    <property type="match status" value="2"/>
</dbReference>
<dbReference type="InterPro" id="IPR000859">
    <property type="entry name" value="CUB_dom"/>
</dbReference>
<dbReference type="InterPro" id="IPR001881">
    <property type="entry name" value="EGF-like_Ca-bd_dom"/>
</dbReference>
<dbReference type="InterPro" id="IPR018097">
    <property type="entry name" value="EGF_Ca-bd_CS"/>
</dbReference>
<dbReference type="InterPro" id="IPR024175">
    <property type="entry name" value="Pept_S1A_C1r/C1S/mannan-bd"/>
</dbReference>
<dbReference type="InterPro" id="IPR009003">
    <property type="entry name" value="Peptidase_S1_PA"/>
</dbReference>
<dbReference type="InterPro" id="IPR043504">
    <property type="entry name" value="Peptidase_S1_PA_chymotrypsin"/>
</dbReference>
<dbReference type="InterPro" id="IPR001314">
    <property type="entry name" value="Peptidase_S1A"/>
</dbReference>
<dbReference type="InterPro" id="IPR035914">
    <property type="entry name" value="Sperma_CUB_dom_sf"/>
</dbReference>
<dbReference type="InterPro" id="IPR035976">
    <property type="entry name" value="Sushi/SCR/CCP_sf"/>
</dbReference>
<dbReference type="InterPro" id="IPR000436">
    <property type="entry name" value="Sushi_SCR_CCP_dom"/>
</dbReference>
<dbReference type="InterPro" id="IPR001254">
    <property type="entry name" value="Trypsin_dom"/>
</dbReference>
<dbReference type="InterPro" id="IPR033116">
    <property type="entry name" value="TRYPSIN_SER"/>
</dbReference>
<dbReference type="PANTHER" id="PTHR24255:SF18">
    <property type="entry name" value="COMPLEMENT C1S SUBCOMPONENT"/>
    <property type="match status" value="1"/>
</dbReference>
<dbReference type="PANTHER" id="PTHR24255">
    <property type="entry name" value="COMPLEMENT COMPONENT 1, S SUBCOMPONENT-RELATED"/>
    <property type="match status" value="1"/>
</dbReference>
<dbReference type="Pfam" id="PF00431">
    <property type="entry name" value="CUB"/>
    <property type="match status" value="2"/>
</dbReference>
<dbReference type="Pfam" id="PF14670">
    <property type="entry name" value="FXa_inhibition"/>
    <property type="match status" value="1"/>
</dbReference>
<dbReference type="Pfam" id="PF00084">
    <property type="entry name" value="Sushi"/>
    <property type="match status" value="2"/>
</dbReference>
<dbReference type="Pfam" id="PF00089">
    <property type="entry name" value="Trypsin"/>
    <property type="match status" value="1"/>
</dbReference>
<dbReference type="PIRSF" id="PIRSF001155">
    <property type="entry name" value="C1r_C1s_MASP"/>
    <property type="match status" value="1"/>
</dbReference>
<dbReference type="PRINTS" id="PR00722">
    <property type="entry name" value="CHYMOTRYPSIN"/>
</dbReference>
<dbReference type="SMART" id="SM00032">
    <property type="entry name" value="CCP"/>
    <property type="match status" value="2"/>
</dbReference>
<dbReference type="SMART" id="SM00042">
    <property type="entry name" value="CUB"/>
    <property type="match status" value="2"/>
</dbReference>
<dbReference type="SMART" id="SM00179">
    <property type="entry name" value="EGF_CA"/>
    <property type="match status" value="1"/>
</dbReference>
<dbReference type="SMART" id="SM00020">
    <property type="entry name" value="Tryp_SPc"/>
    <property type="match status" value="1"/>
</dbReference>
<dbReference type="SUPFAM" id="SSF57535">
    <property type="entry name" value="Complement control module/SCR domain"/>
    <property type="match status" value="2"/>
</dbReference>
<dbReference type="SUPFAM" id="SSF57196">
    <property type="entry name" value="EGF/Laminin"/>
    <property type="match status" value="1"/>
</dbReference>
<dbReference type="SUPFAM" id="SSF49854">
    <property type="entry name" value="Spermadhesin, CUB domain"/>
    <property type="match status" value="2"/>
</dbReference>
<dbReference type="SUPFAM" id="SSF50494">
    <property type="entry name" value="Trypsin-like serine proteases"/>
    <property type="match status" value="1"/>
</dbReference>
<dbReference type="PROSITE" id="PS00010">
    <property type="entry name" value="ASX_HYDROXYL"/>
    <property type="match status" value="1"/>
</dbReference>
<dbReference type="PROSITE" id="PS01180">
    <property type="entry name" value="CUB"/>
    <property type="match status" value="2"/>
</dbReference>
<dbReference type="PROSITE" id="PS01187">
    <property type="entry name" value="EGF_CA"/>
    <property type="match status" value="1"/>
</dbReference>
<dbReference type="PROSITE" id="PS50923">
    <property type="entry name" value="SUSHI"/>
    <property type="match status" value="2"/>
</dbReference>
<dbReference type="PROSITE" id="PS50240">
    <property type="entry name" value="TRYPSIN_DOM"/>
    <property type="match status" value="1"/>
</dbReference>
<dbReference type="PROSITE" id="PS00135">
    <property type="entry name" value="TRYPSIN_SER"/>
    <property type="match status" value="1"/>
</dbReference>
<reference key="1">
    <citation type="journal article" date="2003" name="Biochem. J.">
        <title>Complement C1r and C1s genes are duplicated in the mouse: differential expression generates alternative isomorphs in the liver and in the male reproductive system.</title>
        <authorList>
            <person name="Garnier G."/>
            <person name="Circolo A."/>
            <person name="Xu Y."/>
            <person name="Volanakis J.E."/>
        </authorList>
    </citation>
    <scope>NUCLEOTIDE SEQUENCE [MRNA]</scope>
    <scope>TISSUE SPECIFICITY</scope>
    <source>
        <strain>C57BL/6J</strain>
    </source>
</reference>
<protein>
    <recommendedName>
        <fullName evidence="8">Complement C1s-1 subcomponent</fullName>
        <ecNumber evidence="1">3.4.21.42</ecNumber>
    </recommendedName>
    <alternativeName>
        <fullName>C1 esterase</fullName>
    </alternativeName>
    <alternativeName>
        <fullName>Complement C1s-B subcomponent</fullName>
    </alternativeName>
    <alternativeName>
        <fullName>Complement component 1 subcomponent s-B</fullName>
    </alternativeName>
    <alternativeName>
        <fullName evidence="9">Complement component 1, S subcomponent 2</fullName>
    </alternativeName>
    <component>
        <recommendedName>
            <fullName>Complement C1s-B subcomponent heavy chain</fullName>
        </recommendedName>
    </component>
    <component>
        <recommendedName>
            <fullName>Complement C1s-B subcomponent light chain</fullName>
        </recommendedName>
    </component>
</protein>
<keyword id="KW-0106">Calcium</keyword>
<keyword id="KW-0180">Complement pathway</keyword>
<keyword id="KW-1015">Disulfide bond</keyword>
<keyword id="KW-0245">EGF-like domain</keyword>
<keyword id="KW-0325">Glycoprotein</keyword>
<keyword id="KW-0378">Hydrolase</keyword>
<keyword id="KW-0379">Hydroxylation</keyword>
<keyword id="KW-0391">Immunity</keyword>
<keyword id="KW-0399">Innate immunity</keyword>
<keyword id="KW-0479">Metal-binding</keyword>
<keyword id="KW-0645">Protease</keyword>
<keyword id="KW-1185">Reference proteome</keyword>
<keyword id="KW-0677">Repeat</keyword>
<keyword id="KW-0964">Secreted</keyword>
<keyword id="KW-0720">Serine protease</keyword>
<keyword id="KW-0732">Signal</keyword>
<keyword id="KW-0768">Sushi</keyword>
<evidence type="ECO:0000250" key="1">
    <source>
        <dbReference type="UniProtKB" id="P09871"/>
    </source>
</evidence>
<evidence type="ECO:0000255" key="2"/>
<evidence type="ECO:0000255" key="3">
    <source>
        <dbReference type="PROSITE-ProRule" id="PRU00059"/>
    </source>
</evidence>
<evidence type="ECO:0000255" key="4">
    <source>
        <dbReference type="PROSITE-ProRule" id="PRU00274"/>
    </source>
</evidence>
<evidence type="ECO:0000255" key="5">
    <source>
        <dbReference type="PROSITE-ProRule" id="PRU00302"/>
    </source>
</evidence>
<evidence type="ECO:0000269" key="6">
    <source>
    </source>
</evidence>
<evidence type="ECO:0000303" key="7">
    <source>
    </source>
</evidence>
<evidence type="ECO:0000305" key="8"/>
<evidence type="ECO:0000312" key="9">
    <source>
        <dbReference type="MGI" id="MGI:3644269"/>
    </source>
</evidence>
<sequence length="688" mass="76700">MWYLVLFSLLASFSAEPTMHGEILSPNYPQAYPNDVVKSWDIEVPEGFGIHLYFTHVDIEPSESCAYDSVQIISGGIEEGRLCGQRTSKSPNSPIIEEFQFPYNKLQVVFTSDFSIEEQFTGFAAYYTAIDVNECTDFTDVPCSHFCNNFIGGYFCSCPPEYFLHDDMRNCGVNCSGDVFTALIGEISSPNYPNPYPENSRCEYQIQLQEGFQVVVTMQREDFDVEPADSEGNCPDSLTFAAKNQQFGPYCGDGFPGPLTIRTQSNTLGIVFQTDLMGQKKGWKLRYHGDPISCPKESTANSNWEPDKAKYVFKDVVKITCVDGFEVVEGHVSSTSYYSTCQSDGQWSNSGLKCQPVYCGIPDPIANGKVEEPENSVFGTVIHYTCEEPYYYMEHEEGGEYRCAANGRWVNDQLGIELPRCIPVCGVPTEPFQVQQKIFGGQPAKIENFPWQVFFNHPTAGGALINEYWVLTAAHVVEKNSDPSMYAGITALRLADLENAQRLYTKRVIIHPGWKEDDDLNPRTNFDNDIALVQLKDPVKMGPKFSPICLPGTSSEYNLSPGDMGLISGWGRTEKRLHVINLRGAKVPVTSLETCKQVKEENPTARPEDYVITDNMICAGEKGVDSCKGDSGGAFAFQVPNVKAPKFYVAGLVSWGKKCGAYGVYTKVKNYVDWILKTMQENSGPRKD</sequence>
<accession>Q8CFG8</accession>
<proteinExistence type="evidence at transcript level"/>
<comment type="function">
    <text evidence="1">Component of the complement C1 complex, a multiprotein complex that initiates the classical pathway of the complement system, a cascade of proteins that leads to phagocytosis and breakdown of pathogens and signaling that strengthens the adaptive immune system. C1S is activated following association of the C1 complex with immunoglobulins (IgG or IgM) complexed with antigens to form antigen-antibody complexes on the surface of pathogens. C1S is cleaved and activated by C1R to generate C1s subcomponent heavy and light chains. C1s subcomponent light chain then cleaves and activates C2 and C4, the next components of the classical complement pathway.</text>
</comment>
<comment type="function">
    <molecule>Complement C1s-B subcomponent light chain</molecule>
    <text evidence="1">Serine protease component of the complement C1 complex, which catalyzes cleavage and activation of C2 and C4, the next components of the classical complement pathway. Also cleaves IGFBP5 and thereby inhibits the trophic effects of IGF1.</text>
</comment>
<comment type="catalytic activity">
    <molecule>Complement C1s-B subcomponent light chain</molecule>
    <reaction evidence="1">
        <text>Cleavage of Arg-|-Ala bond in complement component C4 to form C4a and C4b, and Lys(or Arg)-|-Lys bond in complement component C2 to form C2a and C2b: the 'classical' pathway C3 convertase.</text>
        <dbReference type="EC" id="3.4.21.42"/>
    </reaction>
</comment>
<comment type="activity regulation">
    <text evidence="1">Cleaved and activated by C1R. Immunoglobulin-binding promotes autoactivation of C1R, which results in the cleavage of the Arg-Ile bond in the catalytic domain. Inhibited by C1 inhibitor (SERPING1).</text>
</comment>
<comment type="subunit">
    <text evidence="1">Core component of the complement C1 complex, a calcium-dependent complex composed of 1 molecule of the C1Q subcomplex, 2 molecules of C1R and 2 molecules of C1S. The C1Q subcomplex is composed 18 subunits: 3 chains of C1QA, C1QB, and C1QC trimerize to form 6 collagen-like triple helices connected to six globular ligand-recognition modules.</text>
</comment>
<comment type="subcellular location">
    <subcellularLocation>
        <location evidence="1">Secreted</location>
    </subcellularLocation>
    <subcellularLocation>
        <location evidence="1">Cell surface</location>
    </subcellularLocation>
    <text evidence="1">Recruited to the surface of pathogens by the C1Q subcomplex.</text>
</comment>
<comment type="tissue specificity">
    <text evidence="6">Specifically expressed in male reproductive tissues.</text>
</comment>
<comment type="PTM">
    <text evidence="1">Cleaved and activated by C1R to generate Complement C1s subcomponent heavy and light chains.</text>
</comment>
<comment type="PTM">
    <text evidence="1">The iron and 2-oxoglutarate dependent 3-hydroxylation of aspartate and asparagine is (R) stereospecific within EGF domains.</text>
</comment>
<comment type="similarity">
    <text evidence="4">Belongs to the peptidase S1 family.</text>
</comment>
<organism>
    <name type="scientific">Mus musculus</name>
    <name type="common">Mouse</name>
    <dbReference type="NCBI Taxonomy" id="10090"/>
    <lineage>
        <taxon>Eukaryota</taxon>
        <taxon>Metazoa</taxon>
        <taxon>Chordata</taxon>
        <taxon>Craniata</taxon>
        <taxon>Vertebrata</taxon>
        <taxon>Euteleostomi</taxon>
        <taxon>Mammalia</taxon>
        <taxon>Eutheria</taxon>
        <taxon>Euarchontoglires</taxon>
        <taxon>Glires</taxon>
        <taxon>Rodentia</taxon>
        <taxon>Myomorpha</taxon>
        <taxon>Muroidea</taxon>
        <taxon>Muridae</taxon>
        <taxon>Murinae</taxon>
        <taxon>Mus</taxon>
        <taxon>Mus</taxon>
    </lineage>
</organism>
<name>CS1B_MOUSE</name>
<feature type="signal peptide" evidence="1">
    <location>
        <begin position="1"/>
        <end position="15"/>
    </location>
</feature>
<feature type="chain" id="PRO_0000042196" description="Complement C1s-1 subcomponent">
    <location>
        <begin position="16"/>
        <end position="688"/>
    </location>
</feature>
<feature type="chain" id="PRO_0000042197" description="Complement C1s-B subcomponent heavy chain" evidence="1">
    <location>
        <begin position="16"/>
        <end position="437"/>
    </location>
</feature>
<feature type="chain" id="PRO_0000042198" description="Complement C1s-B subcomponent light chain" evidence="1">
    <location>
        <begin position="438"/>
        <end position="688"/>
    </location>
</feature>
<feature type="domain" description="CUB 1" evidence="3">
    <location>
        <begin position="16"/>
        <end position="130"/>
    </location>
</feature>
<feature type="domain" description="EGF-like; calcium-binding" evidence="2">
    <location>
        <begin position="131"/>
        <end position="172"/>
    </location>
</feature>
<feature type="domain" description="CUB 2" evidence="3">
    <location>
        <begin position="175"/>
        <end position="290"/>
    </location>
</feature>
<feature type="domain" description="Sushi 1" evidence="5">
    <location>
        <begin position="292"/>
        <end position="356"/>
    </location>
</feature>
<feature type="domain" description="Sushi 2" evidence="5">
    <location>
        <begin position="357"/>
        <end position="423"/>
    </location>
</feature>
<feature type="domain" description="Peptidase S1" evidence="4">
    <location>
        <begin position="438"/>
        <end position="680"/>
    </location>
</feature>
<feature type="active site" description="Charge relay system" evidence="1">
    <location>
        <position position="475"/>
    </location>
</feature>
<feature type="active site" description="Charge relay system" evidence="1">
    <location>
        <position position="529"/>
    </location>
</feature>
<feature type="active site" description="Charge relay system" evidence="1">
    <location>
        <position position="631"/>
    </location>
</feature>
<feature type="binding site" evidence="1">
    <location>
        <position position="60"/>
    </location>
    <ligand>
        <name>Ca(2+)</name>
        <dbReference type="ChEBI" id="CHEBI:29108"/>
        <label>1</label>
    </ligand>
</feature>
<feature type="binding site" evidence="1">
    <location>
        <position position="68"/>
    </location>
    <ligand>
        <name>Ca(2+)</name>
        <dbReference type="ChEBI" id="CHEBI:29108"/>
        <label>1</label>
    </ligand>
</feature>
<feature type="binding site" evidence="1">
    <location>
        <position position="113"/>
    </location>
    <ligand>
        <name>Ca(2+)</name>
        <dbReference type="ChEBI" id="CHEBI:29108"/>
        <label>1</label>
    </ligand>
</feature>
<feature type="binding site" evidence="1">
    <location>
        <position position="131"/>
    </location>
    <ligand>
        <name>Ca(2+)</name>
        <dbReference type="ChEBI" id="CHEBI:29108"/>
        <label>2</label>
    </ligand>
</feature>
<feature type="binding site" evidence="1">
    <location>
        <position position="132"/>
    </location>
    <ligand>
        <name>Ca(2+)</name>
        <dbReference type="ChEBI" id="CHEBI:29108"/>
        <label>2</label>
    </ligand>
</feature>
<feature type="binding site" evidence="1">
    <location>
        <position position="134"/>
    </location>
    <ligand>
        <name>Ca(2+)</name>
        <dbReference type="ChEBI" id="CHEBI:29108"/>
        <label>2</label>
    </ligand>
</feature>
<feature type="binding site" evidence="1">
    <location>
        <position position="149"/>
    </location>
    <ligand>
        <name>Ca(2+)</name>
        <dbReference type="ChEBI" id="CHEBI:29108"/>
        <label>2</label>
    </ligand>
</feature>
<feature type="binding site" evidence="1">
    <location>
        <position position="150"/>
    </location>
    <ligand>
        <name>Ca(2+)</name>
        <dbReference type="ChEBI" id="CHEBI:29108"/>
        <label>2</label>
    </ligand>
</feature>
<feature type="binding site" evidence="1">
    <location>
        <position position="153"/>
    </location>
    <ligand>
        <name>Ca(2+)</name>
        <dbReference type="ChEBI" id="CHEBI:29108"/>
        <label>2</label>
    </ligand>
</feature>
<feature type="binding site" evidence="1">
    <location>
        <position position="226"/>
    </location>
    <ligand>
        <name>Ca(2+)</name>
        <dbReference type="ChEBI" id="CHEBI:29108"/>
        <label>3</label>
    </ligand>
</feature>
<feature type="binding site" evidence="1">
    <location>
        <position position="236"/>
    </location>
    <ligand>
        <name>Ca(2+)</name>
        <dbReference type="ChEBI" id="CHEBI:29108"/>
        <label>3</label>
    </ligand>
</feature>
<feature type="binding site" evidence="1">
    <location>
        <position position="275"/>
    </location>
    <ligand>
        <name>Ca(2+)</name>
        <dbReference type="ChEBI" id="CHEBI:29108"/>
        <label>3</label>
    </ligand>
</feature>
<feature type="binding site" evidence="1">
    <location>
        <position position="278"/>
    </location>
    <ligand>
        <name>Ca(2+)</name>
        <dbReference type="ChEBI" id="CHEBI:29108"/>
        <label>3</label>
    </ligand>
</feature>
<feature type="binding site" evidence="1">
    <location>
        <position position="279"/>
    </location>
    <ligand>
        <name>Ca(2+)</name>
        <dbReference type="ChEBI" id="CHEBI:29108"/>
        <label>3</label>
    </ligand>
</feature>
<feature type="site" description="Cleavage; by C1R" evidence="1">
    <location>
        <begin position="437"/>
        <end position="438"/>
    </location>
</feature>
<feature type="modified residue" description="(3R)-3-hydroxyasparagine" evidence="1">
    <location>
        <position position="149"/>
    </location>
</feature>
<feature type="glycosylation site" description="N-linked (GlcNAc...) asparagine" evidence="2">
    <location>
        <position position="174"/>
    </location>
</feature>
<feature type="disulfide bond" evidence="1">
    <location>
        <begin position="65"/>
        <end position="83"/>
    </location>
</feature>
<feature type="disulfide bond" evidence="1">
    <location>
        <begin position="135"/>
        <end position="147"/>
    </location>
</feature>
<feature type="disulfide bond" evidence="1">
    <location>
        <begin position="143"/>
        <end position="156"/>
    </location>
</feature>
<feature type="disulfide bond" evidence="1">
    <location>
        <begin position="158"/>
        <end position="171"/>
    </location>
</feature>
<feature type="disulfide bond" evidence="1">
    <location>
        <begin position="175"/>
        <end position="202"/>
    </location>
</feature>
<feature type="disulfide bond" evidence="1">
    <location>
        <begin position="234"/>
        <end position="251"/>
    </location>
</feature>
<feature type="disulfide bond" evidence="1">
    <location>
        <begin position="294"/>
        <end position="341"/>
    </location>
</feature>
<feature type="disulfide bond" evidence="1">
    <location>
        <begin position="321"/>
        <end position="354"/>
    </location>
</feature>
<feature type="disulfide bond" evidence="1">
    <location>
        <begin position="359"/>
        <end position="403"/>
    </location>
</feature>
<feature type="disulfide bond" evidence="1">
    <location>
        <begin position="386"/>
        <end position="421"/>
    </location>
</feature>
<feature type="disulfide bond" description="Interchain (between heavy and light chains)" evidence="3 4 5">
    <location>
        <begin position="425"/>
        <end position="549"/>
    </location>
</feature>
<feature type="disulfide bond" evidence="1">
    <location>
        <begin position="595"/>
        <end position="618"/>
    </location>
</feature>
<feature type="disulfide bond" evidence="1">
    <location>
        <begin position="627"/>
        <end position="659"/>
    </location>
</feature>
<gene>
    <name evidence="9" type="primary">C1s2</name>
    <name evidence="7" type="synonym">C1s</name>
    <name evidence="7 9" type="synonym">C1sb</name>
    <name evidence="9" type="synonym">Gm5077</name>
</gene>